<accession>Q9CLE1</accession>
<feature type="chain" id="PRO_0000060427" description="tRNA (guanine-N(1)-)-methyltransferase">
    <location>
        <begin position="1"/>
        <end position="245"/>
    </location>
</feature>
<feature type="binding site" evidence="1">
    <location>
        <position position="113"/>
    </location>
    <ligand>
        <name>S-adenosyl-L-methionine</name>
        <dbReference type="ChEBI" id="CHEBI:59789"/>
    </ligand>
</feature>
<feature type="binding site" evidence="1">
    <location>
        <begin position="133"/>
        <end position="138"/>
    </location>
    <ligand>
        <name>S-adenosyl-L-methionine</name>
        <dbReference type="ChEBI" id="CHEBI:59789"/>
    </ligand>
</feature>
<proteinExistence type="inferred from homology"/>
<gene>
    <name type="primary">trmD</name>
    <name type="ordered locus">PM1297</name>
</gene>
<dbReference type="EC" id="2.1.1.228"/>
<dbReference type="EMBL" id="AE004439">
    <property type="protein sequence ID" value="AAK03381.1"/>
    <property type="molecule type" value="Genomic_DNA"/>
</dbReference>
<dbReference type="RefSeq" id="WP_005717781.1">
    <property type="nucleotide sequence ID" value="NC_002663.1"/>
</dbReference>
<dbReference type="SMR" id="Q9CLE1"/>
<dbReference type="STRING" id="272843.PM1297"/>
<dbReference type="EnsemblBacteria" id="AAK03381">
    <property type="protein sequence ID" value="AAK03381"/>
    <property type="gene ID" value="PM1297"/>
</dbReference>
<dbReference type="GeneID" id="77206749"/>
<dbReference type="KEGG" id="pmu:PM1297"/>
<dbReference type="HOGENOM" id="CLU_047363_0_1_6"/>
<dbReference type="OrthoDB" id="9807416at2"/>
<dbReference type="Proteomes" id="UP000000809">
    <property type="component" value="Chromosome"/>
</dbReference>
<dbReference type="GO" id="GO:0005829">
    <property type="term" value="C:cytosol"/>
    <property type="evidence" value="ECO:0007669"/>
    <property type="project" value="TreeGrafter"/>
</dbReference>
<dbReference type="GO" id="GO:0052906">
    <property type="term" value="F:tRNA (guanine(37)-N1)-methyltransferase activity"/>
    <property type="evidence" value="ECO:0007669"/>
    <property type="project" value="UniProtKB-UniRule"/>
</dbReference>
<dbReference type="GO" id="GO:0002939">
    <property type="term" value="P:tRNA N1-guanine methylation"/>
    <property type="evidence" value="ECO:0007669"/>
    <property type="project" value="TreeGrafter"/>
</dbReference>
<dbReference type="CDD" id="cd18080">
    <property type="entry name" value="TrmD-like"/>
    <property type="match status" value="1"/>
</dbReference>
<dbReference type="FunFam" id="1.10.1270.20:FF:000001">
    <property type="entry name" value="tRNA (guanine-N(1)-)-methyltransferase"/>
    <property type="match status" value="1"/>
</dbReference>
<dbReference type="FunFam" id="3.40.1280.10:FF:000001">
    <property type="entry name" value="tRNA (guanine-N(1)-)-methyltransferase"/>
    <property type="match status" value="1"/>
</dbReference>
<dbReference type="Gene3D" id="3.40.1280.10">
    <property type="match status" value="1"/>
</dbReference>
<dbReference type="Gene3D" id="1.10.1270.20">
    <property type="entry name" value="tRNA(m1g37)methyltransferase, domain 2"/>
    <property type="match status" value="1"/>
</dbReference>
<dbReference type="HAMAP" id="MF_00605">
    <property type="entry name" value="TrmD"/>
    <property type="match status" value="1"/>
</dbReference>
<dbReference type="InterPro" id="IPR029028">
    <property type="entry name" value="Alpha/beta_knot_MTases"/>
</dbReference>
<dbReference type="InterPro" id="IPR023148">
    <property type="entry name" value="tRNA_m1G_MeTrfase_C_sf"/>
</dbReference>
<dbReference type="InterPro" id="IPR002649">
    <property type="entry name" value="tRNA_m1G_MeTrfase_TrmD"/>
</dbReference>
<dbReference type="InterPro" id="IPR029026">
    <property type="entry name" value="tRNA_m1G_MTases_N"/>
</dbReference>
<dbReference type="InterPro" id="IPR016009">
    <property type="entry name" value="tRNA_MeTrfase_TRMD/TRM10"/>
</dbReference>
<dbReference type="NCBIfam" id="NF000648">
    <property type="entry name" value="PRK00026.1"/>
    <property type="match status" value="1"/>
</dbReference>
<dbReference type="NCBIfam" id="TIGR00088">
    <property type="entry name" value="trmD"/>
    <property type="match status" value="1"/>
</dbReference>
<dbReference type="PANTHER" id="PTHR46417">
    <property type="entry name" value="TRNA (GUANINE-N(1)-)-METHYLTRANSFERASE"/>
    <property type="match status" value="1"/>
</dbReference>
<dbReference type="PANTHER" id="PTHR46417:SF1">
    <property type="entry name" value="TRNA (GUANINE-N(1)-)-METHYLTRANSFERASE"/>
    <property type="match status" value="1"/>
</dbReference>
<dbReference type="Pfam" id="PF01746">
    <property type="entry name" value="tRNA_m1G_MT"/>
    <property type="match status" value="1"/>
</dbReference>
<dbReference type="PIRSF" id="PIRSF000386">
    <property type="entry name" value="tRNA_mtase"/>
    <property type="match status" value="1"/>
</dbReference>
<dbReference type="SUPFAM" id="SSF75217">
    <property type="entry name" value="alpha/beta knot"/>
    <property type="match status" value="1"/>
</dbReference>
<keyword id="KW-0963">Cytoplasm</keyword>
<keyword id="KW-0489">Methyltransferase</keyword>
<keyword id="KW-1185">Reference proteome</keyword>
<keyword id="KW-0949">S-adenosyl-L-methionine</keyword>
<keyword id="KW-0808">Transferase</keyword>
<keyword id="KW-0819">tRNA processing</keyword>
<protein>
    <recommendedName>
        <fullName>tRNA (guanine-N(1)-)-methyltransferase</fullName>
        <ecNumber>2.1.1.228</ecNumber>
    </recommendedName>
    <alternativeName>
        <fullName>M1G-methyltransferase</fullName>
    </alternativeName>
    <alternativeName>
        <fullName>tRNA [GM37] methyltransferase</fullName>
    </alternativeName>
</protein>
<reference key="1">
    <citation type="journal article" date="2001" name="Proc. Natl. Acad. Sci. U.S.A.">
        <title>Complete genomic sequence of Pasteurella multocida Pm70.</title>
        <authorList>
            <person name="May B.J."/>
            <person name="Zhang Q."/>
            <person name="Li L.L."/>
            <person name="Paustian M.L."/>
            <person name="Whittam T.S."/>
            <person name="Kapur V."/>
        </authorList>
    </citation>
    <scope>NUCLEOTIDE SEQUENCE [LARGE SCALE GENOMIC DNA]</scope>
    <source>
        <strain>Pm70</strain>
    </source>
</reference>
<comment type="function">
    <text evidence="1">Specifically methylates guanosine-37 in various tRNAs.</text>
</comment>
<comment type="catalytic activity">
    <reaction>
        <text>guanosine(37) in tRNA + S-adenosyl-L-methionine = N(1)-methylguanosine(37) in tRNA + S-adenosyl-L-homocysteine + H(+)</text>
        <dbReference type="Rhea" id="RHEA:36899"/>
        <dbReference type="Rhea" id="RHEA-COMP:10145"/>
        <dbReference type="Rhea" id="RHEA-COMP:10147"/>
        <dbReference type="ChEBI" id="CHEBI:15378"/>
        <dbReference type="ChEBI" id="CHEBI:57856"/>
        <dbReference type="ChEBI" id="CHEBI:59789"/>
        <dbReference type="ChEBI" id="CHEBI:73542"/>
        <dbReference type="ChEBI" id="CHEBI:74269"/>
        <dbReference type="EC" id="2.1.1.228"/>
    </reaction>
</comment>
<comment type="subunit">
    <text evidence="1">Homodimer.</text>
</comment>
<comment type="subcellular location">
    <subcellularLocation>
        <location evidence="2">Cytoplasm</location>
    </subcellularLocation>
</comment>
<comment type="similarity">
    <text evidence="2">Belongs to the RNA methyltransferase TrmD family.</text>
</comment>
<organism>
    <name type="scientific">Pasteurella multocida (strain Pm70)</name>
    <dbReference type="NCBI Taxonomy" id="272843"/>
    <lineage>
        <taxon>Bacteria</taxon>
        <taxon>Pseudomonadati</taxon>
        <taxon>Pseudomonadota</taxon>
        <taxon>Gammaproteobacteria</taxon>
        <taxon>Pasteurellales</taxon>
        <taxon>Pasteurellaceae</taxon>
        <taxon>Pasteurella</taxon>
    </lineage>
</organism>
<name>TRMD_PASMU</name>
<sequence length="245" mass="27495">MLVGIISLFPEMFKAITEFGVTGRAVKQNLLQVRCWNPRDFTHDKHKTVDDRPYGGGPGMLMMVQPLRDAIQAAKAEVGEGAKVIYLSPQGRKLDQAGVKELAQHQKLILLCGRYEGIDERLIETEVDEEWSVGDYVLTGGELPAMTLIDAVARFIPGVLGKQASADEDSFAEGLLDCPHYTRPEVLDGLAVPPVLMSGNHEEIRKWRLRQSLERTWLRRPELLESLALTDEQRKLLKQIKAEHS</sequence>
<evidence type="ECO:0000250" key="1"/>
<evidence type="ECO:0000305" key="2"/>